<accession>A4QKI4</accession>
<evidence type="ECO:0000255" key="1">
    <source>
        <dbReference type="HAMAP-Rule" id="MF_01321"/>
    </source>
</evidence>
<proteinExistence type="inferred from homology"/>
<feature type="chain" id="PRO_0000300435" description="DNA-directed RNA polymerase subunit beta">
    <location>
        <begin position="1"/>
        <end position="1072"/>
    </location>
</feature>
<reference key="1">
    <citation type="submission" date="2007-03" db="EMBL/GenBank/DDBJ databases">
        <title>Sequencing analysis of Capsella bursa-pastoris JO22 chloroplast DNA.</title>
        <authorList>
            <person name="Hosouchi T."/>
            <person name="Tsuruoka H."/>
            <person name="Kotani H."/>
        </authorList>
    </citation>
    <scope>NUCLEOTIDE SEQUENCE [LARGE SCALE GENOMIC DNA]</scope>
</reference>
<comment type="function">
    <text evidence="1">DNA-dependent RNA polymerase catalyzes the transcription of DNA into RNA using the four ribonucleoside triphosphates as substrates.</text>
</comment>
<comment type="catalytic activity">
    <reaction evidence="1">
        <text>RNA(n) + a ribonucleoside 5'-triphosphate = RNA(n+1) + diphosphate</text>
        <dbReference type="Rhea" id="RHEA:21248"/>
        <dbReference type="Rhea" id="RHEA-COMP:14527"/>
        <dbReference type="Rhea" id="RHEA-COMP:17342"/>
        <dbReference type="ChEBI" id="CHEBI:33019"/>
        <dbReference type="ChEBI" id="CHEBI:61557"/>
        <dbReference type="ChEBI" id="CHEBI:140395"/>
        <dbReference type="EC" id="2.7.7.6"/>
    </reaction>
</comment>
<comment type="subunit">
    <text evidence="1">In plastids the minimal PEP RNA polymerase catalytic core is composed of four subunits: alpha, beta, beta', and beta''. When a (nuclear-encoded) sigma factor is associated with the core the holoenzyme is formed, which can initiate transcription.</text>
</comment>
<comment type="subcellular location">
    <subcellularLocation>
        <location>Plastid</location>
        <location>Chloroplast</location>
    </subcellularLocation>
</comment>
<comment type="similarity">
    <text evidence="1">Belongs to the RNA polymerase beta chain family.</text>
</comment>
<protein>
    <recommendedName>
        <fullName evidence="1">DNA-directed RNA polymerase subunit beta</fullName>
        <ecNumber evidence="1">2.7.7.6</ecNumber>
    </recommendedName>
    <alternativeName>
        <fullName evidence="1">PEP</fullName>
    </alternativeName>
    <alternativeName>
        <fullName evidence="1">Plastid-encoded RNA polymerase subunit beta</fullName>
        <shortName evidence="1">RNA polymerase subunit beta</shortName>
    </alternativeName>
</protein>
<geneLocation type="chloroplast"/>
<sequence length="1072" mass="121085">MLGDEKEGTSTIPGLNQIQFEGFYRFIDQGLIEELSKFPKIEDIDHEIEFQLFVETYQLVEPLIKERDAVYESLTYSSELYVSAGLIWKTSRNMQEQRIFIGNIPLMNSLGTSIVNGIYRIVINQILQSPGIYYQSELDHNGISVYTGTIISDWGGRLELEIDKKARIWARVSRKQKISILVLSSAMGLNLREILENVCYPEIFLSFLTDKEKKKIGSKENAILEFYQQFSCVGGDPIFSESLCKELQKKFFHQRCELGRIGRRNINWRLNLNIPQNNIFLLPRDILAAADHLIGMKFGMGTLDDMNHLKNKRIRSVADLLQDQLGLALARLENVVKGTISGAIRHKLIPTPQNLVTSTPLTTTYESFFGLHPLSQVLDRTNPLTQIVHGRKLSYLGPGGLTGRTANFRIRDIHPSHYGRICPIDTSEGINVGLIGSLSIHARIGDWGSLESPFYELFEKSKKARIRMLFLSPSQDEYYMIAAGNSLALNRGIQEEQAVPARYRQEFLTIAWEEVHLRSIFPFQYFSIGASLIPFIEHNDANRALMSSNMQRQAVPLSRSEKCIVGTGLERQVALDSGVPAIAEHEGKILYTDTEKIVFSGNGDTLSIPLIMYQRSNKNTCMHQKPQVRRGKCIKKGQILADGAATVGGELALGKNILVAYMPWEGYNFEDAVLISECLVYGDIYTSFHIRKYEIQTHVTTQGPERITKEIPHLEGRLLRNLDKNGIVMLGSWVETGDILVGKLTPQVAKESSYAPEDRLLRAILGIQVSTSKETCLKLPIGGRGRVIDVRWVQKKGGSSYNPEIIRVYISQKREIKVGDKVAGRHGNKGIISKILPRQDMPYLQDGRPVDMVFNPLGVPSRMNVGQIFECSLGLAGSLLDRHYRIAPFDERYEQEASRKLVFSELYEASKQTANPWVFEPEYPGKSRIFDGRTGDPFEQPVIIGKPYILKLIHQVDDKIHGRSSGHYALVTQQPLRGRSKQGGQRVGEMEVWALEGFGVAHILQEMLTYKSDHIRARQEVLGTTIIGGTIPKPEDAPESFRLLVRELRSLALELNHFLVSEKNFQINRKEV</sequence>
<keyword id="KW-0150">Chloroplast</keyword>
<keyword id="KW-0240">DNA-directed RNA polymerase</keyword>
<keyword id="KW-0548">Nucleotidyltransferase</keyword>
<keyword id="KW-0934">Plastid</keyword>
<keyword id="KW-0804">Transcription</keyword>
<keyword id="KW-0808">Transferase</keyword>
<organism>
    <name type="scientific">Capsella bursa-pastoris</name>
    <name type="common">Shepherd's purse</name>
    <name type="synonym">Thlaspi bursa-pastoris</name>
    <dbReference type="NCBI Taxonomy" id="3719"/>
    <lineage>
        <taxon>Eukaryota</taxon>
        <taxon>Viridiplantae</taxon>
        <taxon>Streptophyta</taxon>
        <taxon>Embryophyta</taxon>
        <taxon>Tracheophyta</taxon>
        <taxon>Spermatophyta</taxon>
        <taxon>Magnoliopsida</taxon>
        <taxon>eudicotyledons</taxon>
        <taxon>Gunneridae</taxon>
        <taxon>Pentapetalae</taxon>
        <taxon>rosids</taxon>
        <taxon>malvids</taxon>
        <taxon>Brassicales</taxon>
        <taxon>Brassicaceae</taxon>
        <taxon>Camelineae</taxon>
        <taxon>Capsella</taxon>
    </lineage>
</organism>
<name>RPOB_CAPBU</name>
<gene>
    <name evidence="1" type="primary">rpoB</name>
</gene>
<dbReference type="EC" id="2.7.7.6" evidence="1"/>
<dbReference type="EMBL" id="AP009371">
    <property type="protein sequence ID" value="BAF50189.1"/>
    <property type="molecule type" value="Genomic_DNA"/>
</dbReference>
<dbReference type="RefSeq" id="YP_001123365.1">
    <property type="nucleotide sequence ID" value="NC_009270.1"/>
</dbReference>
<dbReference type="SMR" id="A4QKI4"/>
<dbReference type="GeneID" id="4961636"/>
<dbReference type="GO" id="GO:0009507">
    <property type="term" value="C:chloroplast"/>
    <property type="evidence" value="ECO:0007669"/>
    <property type="project" value="UniProtKB-SubCell"/>
</dbReference>
<dbReference type="GO" id="GO:0000428">
    <property type="term" value="C:DNA-directed RNA polymerase complex"/>
    <property type="evidence" value="ECO:0007669"/>
    <property type="project" value="UniProtKB-KW"/>
</dbReference>
<dbReference type="GO" id="GO:0005739">
    <property type="term" value="C:mitochondrion"/>
    <property type="evidence" value="ECO:0007669"/>
    <property type="project" value="GOC"/>
</dbReference>
<dbReference type="GO" id="GO:0003677">
    <property type="term" value="F:DNA binding"/>
    <property type="evidence" value="ECO:0007669"/>
    <property type="project" value="UniProtKB-UniRule"/>
</dbReference>
<dbReference type="GO" id="GO:0003899">
    <property type="term" value="F:DNA-directed RNA polymerase activity"/>
    <property type="evidence" value="ECO:0007669"/>
    <property type="project" value="UniProtKB-UniRule"/>
</dbReference>
<dbReference type="GO" id="GO:0032549">
    <property type="term" value="F:ribonucleoside binding"/>
    <property type="evidence" value="ECO:0007669"/>
    <property type="project" value="InterPro"/>
</dbReference>
<dbReference type="GO" id="GO:0006351">
    <property type="term" value="P:DNA-templated transcription"/>
    <property type="evidence" value="ECO:0007669"/>
    <property type="project" value="UniProtKB-UniRule"/>
</dbReference>
<dbReference type="CDD" id="cd00653">
    <property type="entry name" value="RNA_pol_B_RPB2"/>
    <property type="match status" value="1"/>
</dbReference>
<dbReference type="FunFam" id="2.40.50.150:FF:000006">
    <property type="entry name" value="DNA-directed RNA polymerase subunit beta"/>
    <property type="match status" value="1"/>
</dbReference>
<dbReference type="FunFam" id="3.90.1110.10:FF:000009">
    <property type="entry name" value="DNA-directed RNA polymerase subunit beta"/>
    <property type="match status" value="1"/>
</dbReference>
<dbReference type="Gene3D" id="2.40.50.100">
    <property type="match status" value="1"/>
</dbReference>
<dbReference type="Gene3D" id="2.40.50.150">
    <property type="match status" value="1"/>
</dbReference>
<dbReference type="Gene3D" id="3.90.1100.10">
    <property type="match status" value="1"/>
</dbReference>
<dbReference type="Gene3D" id="2.30.150.10">
    <property type="entry name" value="DNA-directed RNA polymerase, beta subunit, external 1 domain"/>
    <property type="match status" value="1"/>
</dbReference>
<dbReference type="Gene3D" id="2.40.270.10">
    <property type="entry name" value="DNA-directed RNA polymerase, subunit 2, domain 6"/>
    <property type="match status" value="2"/>
</dbReference>
<dbReference type="Gene3D" id="3.90.1800.10">
    <property type="entry name" value="RNA polymerase alpha subunit dimerisation domain"/>
    <property type="match status" value="1"/>
</dbReference>
<dbReference type="Gene3D" id="3.90.1110.10">
    <property type="entry name" value="RNA polymerase Rpb2, domain 2"/>
    <property type="match status" value="1"/>
</dbReference>
<dbReference type="HAMAP" id="MF_01321">
    <property type="entry name" value="RNApol_bact_RpoB"/>
    <property type="match status" value="1"/>
</dbReference>
<dbReference type="InterPro" id="IPR042107">
    <property type="entry name" value="DNA-dir_RNA_pol_bsu_ext_1_sf"/>
</dbReference>
<dbReference type="InterPro" id="IPR015712">
    <property type="entry name" value="DNA-dir_RNA_pol_su2"/>
</dbReference>
<dbReference type="InterPro" id="IPR007120">
    <property type="entry name" value="DNA-dir_RNAP_su2_dom"/>
</dbReference>
<dbReference type="InterPro" id="IPR037033">
    <property type="entry name" value="DNA-dir_RNAP_su2_hyb_sf"/>
</dbReference>
<dbReference type="InterPro" id="IPR010243">
    <property type="entry name" value="RNA_pol_bsu_bac"/>
</dbReference>
<dbReference type="InterPro" id="IPR007121">
    <property type="entry name" value="RNA_pol_bsu_CS"/>
</dbReference>
<dbReference type="InterPro" id="IPR007642">
    <property type="entry name" value="RNA_pol_Rpb2_2"/>
</dbReference>
<dbReference type="InterPro" id="IPR037034">
    <property type="entry name" value="RNA_pol_Rpb2_2_sf"/>
</dbReference>
<dbReference type="InterPro" id="IPR007645">
    <property type="entry name" value="RNA_pol_Rpb2_3"/>
</dbReference>
<dbReference type="InterPro" id="IPR007641">
    <property type="entry name" value="RNA_pol_Rpb2_7"/>
</dbReference>
<dbReference type="InterPro" id="IPR014724">
    <property type="entry name" value="RNA_pol_RPB2_OB-fold"/>
</dbReference>
<dbReference type="NCBIfam" id="NF001616">
    <property type="entry name" value="PRK00405.1"/>
    <property type="match status" value="1"/>
</dbReference>
<dbReference type="PANTHER" id="PTHR20856">
    <property type="entry name" value="DNA-DIRECTED RNA POLYMERASE I SUBUNIT 2"/>
    <property type="match status" value="1"/>
</dbReference>
<dbReference type="Pfam" id="PF04561">
    <property type="entry name" value="RNA_pol_Rpb2_2"/>
    <property type="match status" value="1"/>
</dbReference>
<dbReference type="Pfam" id="PF04565">
    <property type="entry name" value="RNA_pol_Rpb2_3"/>
    <property type="match status" value="1"/>
</dbReference>
<dbReference type="Pfam" id="PF00562">
    <property type="entry name" value="RNA_pol_Rpb2_6"/>
    <property type="match status" value="1"/>
</dbReference>
<dbReference type="Pfam" id="PF04560">
    <property type="entry name" value="RNA_pol_Rpb2_7"/>
    <property type="match status" value="1"/>
</dbReference>
<dbReference type="SUPFAM" id="SSF64484">
    <property type="entry name" value="beta and beta-prime subunits of DNA dependent RNA-polymerase"/>
    <property type="match status" value="1"/>
</dbReference>
<dbReference type="PROSITE" id="PS01166">
    <property type="entry name" value="RNA_POL_BETA"/>
    <property type="match status" value="1"/>
</dbReference>